<reference key="1">
    <citation type="journal article" date="2009" name="J. Bacteriol.">
        <title>Genome sequence of Azotobacter vinelandii, an obligate aerobe specialized to support diverse anaerobic metabolic processes.</title>
        <authorList>
            <person name="Setubal J.C."/>
            <person name="Dos Santos P."/>
            <person name="Goldman B.S."/>
            <person name="Ertesvaag H."/>
            <person name="Espin G."/>
            <person name="Rubio L.M."/>
            <person name="Valla S."/>
            <person name="Almeida N.F."/>
            <person name="Balasubramanian D."/>
            <person name="Cromes L."/>
            <person name="Curatti L."/>
            <person name="Du Z."/>
            <person name="Godsy E."/>
            <person name="Goodner B."/>
            <person name="Hellner-Burris K."/>
            <person name="Hernandez J.A."/>
            <person name="Houmiel K."/>
            <person name="Imperial J."/>
            <person name="Kennedy C."/>
            <person name="Larson T.J."/>
            <person name="Latreille P."/>
            <person name="Ligon L.S."/>
            <person name="Lu J."/>
            <person name="Maerk M."/>
            <person name="Miller N.M."/>
            <person name="Norton S."/>
            <person name="O'Carroll I.P."/>
            <person name="Paulsen I."/>
            <person name="Raulfs E.C."/>
            <person name="Roemer R."/>
            <person name="Rosser J."/>
            <person name="Segura D."/>
            <person name="Slater S."/>
            <person name="Stricklin S.L."/>
            <person name="Studholme D.J."/>
            <person name="Sun J."/>
            <person name="Viana C.J."/>
            <person name="Wallin E."/>
            <person name="Wang B."/>
            <person name="Wheeler C."/>
            <person name="Zhu H."/>
            <person name="Dean D.R."/>
            <person name="Dixon R."/>
            <person name="Wood D."/>
        </authorList>
    </citation>
    <scope>NUCLEOTIDE SEQUENCE [LARGE SCALE GENOMIC DNA]</scope>
    <source>
        <strain>DJ / ATCC BAA-1303</strain>
    </source>
</reference>
<dbReference type="EMBL" id="CP001157">
    <property type="protein sequence ID" value="ACO79450.1"/>
    <property type="molecule type" value="Genomic_DNA"/>
</dbReference>
<dbReference type="RefSeq" id="WP_012701834.1">
    <property type="nucleotide sequence ID" value="NC_012560.1"/>
</dbReference>
<dbReference type="STRING" id="322710.Avin_32930"/>
<dbReference type="EnsemblBacteria" id="ACO79450">
    <property type="protein sequence ID" value="ACO79450"/>
    <property type="gene ID" value="Avin_32930"/>
</dbReference>
<dbReference type="GeneID" id="88186335"/>
<dbReference type="KEGG" id="avn:Avin_32930"/>
<dbReference type="eggNOG" id="COG2983">
    <property type="taxonomic scope" value="Bacteria"/>
</dbReference>
<dbReference type="HOGENOM" id="CLU_109769_0_1_6"/>
<dbReference type="OrthoDB" id="9786855at2"/>
<dbReference type="Proteomes" id="UP000002424">
    <property type="component" value="Chromosome"/>
</dbReference>
<dbReference type="HAMAP" id="MF_00676">
    <property type="entry name" value="UPF0260"/>
    <property type="match status" value="1"/>
</dbReference>
<dbReference type="InterPro" id="IPR005358">
    <property type="entry name" value="Puta_zinc/iron-chelating_dom"/>
</dbReference>
<dbReference type="InterPro" id="IPR008228">
    <property type="entry name" value="UCP006173"/>
</dbReference>
<dbReference type="NCBIfam" id="NF003501">
    <property type="entry name" value="PRK05170.1-5"/>
    <property type="match status" value="1"/>
</dbReference>
<dbReference type="NCBIfam" id="NF003502">
    <property type="entry name" value="PRK05170.1-6"/>
    <property type="match status" value="1"/>
</dbReference>
<dbReference type="NCBIfam" id="NF003507">
    <property type="entry name" value="PRK05170.2-5"/>
    <property type="match status" value="1"/>
</dbReference>
<dbReference type="PANTHER" id="PTHR37421">
    <property type="entry name" value="UPF0260 PROTEIN YCGN"/>
    <property type="match status" value="1"/>
</dbReference>
<dbReference type="PANTHER" id="PTHR37421:SF1">
    <property type="entry name" value="UPF0260 PROTEIN YCGN"/>
    <property type="match status" value="1"/>
</dbReference>
<dbReference type="Pfam" id="PF03692">
    <property type="entry name" value="CxxCxxCC"/>
    <property type="match status" value="1"/>
</dbReference>
<dbReference type="PIRSF" id="PIRSF006173">
    <property type="entry name" value="UCP006173"/>
    <property type="match status" value="1"/>
</dbReference>
<protein>
    <recommendedName>
        <fullName evidence="1">UPF0260 protein Avin_32930</fullName>
    </recommendedName>
</protein>
<feature type="chain" id="PRO_1000212521" description="UPF0260 protein Avin_32930">
    <location>
        <begin position="1"/>
        <end position="149"/>
    </location>
</feature>
<organism>
    <name type="scientific">Azotobacter vinelandii (strain DJ / ATCC BAA-1303)</name>
    <dbReference type="NCBI Taxonomy" id="322710"/>
    <lineage>
        <taxon>Bacteria</taxon>
        <taxon>Pseudomonadati</taxon>
        <taxon>Pseudomonadota</taxon>
        <taxon>Gammaproteobacteria</taxon>
        <taxon>Pseudomonadales</taxon>
        <taxon>Pseudomonadaceae</taxon>
        <taxon>Azotobacter</taxon>
    </lineage>
</organism>
<gene>
    <name type="ordered locus">Avin_32930</name>
</gene>
<accession>C1DPM9</accession>
<sequence length="149" mass="17146">MAAKVEPFWKRKTLDRLDAEEWESLCDGCGLCCLQKLEDEEDGSVYYTRIACRLLDLETCRCRDYANRRRSVPDCIQLTPAQAGEFQWLPPTCAYRLLAEGEDLPLWHPLVCGDPQAVHRERISRAGRMLSESAVAEDDWEEHLIFRAG</sequence>
<proteinExistence type="inferred from homology"/>
<comment type="similarity">
    <text evidence="1">Belongs to the UPF0260 family.</text>
</comment>
<evidence type="ECO:0000255" key="1">
    <source>
        <dbReference type="HAMAP-Rule" id="MF_00676"/>
    </source>
</evidence>
<name>Y3293_AZOVD</name>